<evidence type="ECO:0000255" key="1">
    <source>
        <dbReference type="HAMAP-Rule" id="MF_00746"/>
    </source>
</evidence>
<protein>
    <recommendedName>
        <fullName evidence="1">Protein SprT</fullName>
    </recommendedName>
</protein>
<dbReference type="EMBL" id="CP000468">
    <property type="protein sequence ID" value="ABJ02370.1"/>
    <property type="molecule type" value="Genomic_DNA"/>
</dbReference>
<dbReference type="RefSeq" id="WP_000858396.1">
    <property type="nucleotide sequence ID" value="NZ_CADILS010000010.1"/>
</dbReference>
<dbReference type="SMR" id="A1AFD0"/>
<dbReference type="KEGG" id="ecv:APECO1_3577"/>
<dbReference type="HOGENOM" id="CLU_113336_0_1_6"/>
<dbReference type="Proteomes" id="UP000008216">
    <property type="component" value="Chromosome"/>
</dbReference>
<dbReference type="GO" id="GO:0005737">
    <property type="term" value="C:cytoplasm"/>
    <property type="evidence" value="ECO:0007669"/>
    <property type="project" value="UniProtKB-SubCell"/>
</dbReference>
<dbReference type="GO" id="GO:0008270">
    <property type="term" value="F:zinc ion binding"/>
    <property type="evidence" value="ECO:0007669"/>
    <property type="project" value="UniProtKB-UniRule"/>
</dbReference>
<dbReference type="GO" id="GO:0006950">
    <property type="term" value="P:response to stress"/>
    <property type="evidence" value="ECO:0007669"/>
    <property type="project" value="UniProtKB-ARBA"/>
</dbReference>
<dbReference type="Gene3D" id="3.30.2010.10">
    <property type="entry name" value="Metalloproteases ('zincins'), catalytic domain"/>
    <property type="match status" value="1"/>
</dbReference>
<dbReference type="HAMAP" id="MF_00746">
    <property type="entry name" value="SprT"/>
    <property type="match status" value="1"/>
</dbReference>
<dbReference type="InterPro" id="IPR006640">
    <property type="entry name" value="SprT-like_domain"/>
</dbReference>
<dbReference type="InterPro" id="IPR035240">
    <property type="entry name" value="SprT_Zn_ribbon"/>
</dbReference>
<dbReference type="InterPro" id="IPR023483">
    <property type="entry name" value="Uncharacterised_SprT"/>
</dbReference>
<dbReference type="NCBIfam" id="NF003421">
    <property type="entry name" value="PRK04860.1"/>
    <property type="match status" value="1"/>
</dbReference>
<dbReference type="PANTHER" id="PTHR38773">
    <property type="entry name" value="PROTEIN SPRT"/>
    <property type="match status" value="1"/>
</dbReference>
<dbReference type="PANTHER" id="PTHR38773:SF1">
    <property type="entry name" value="PROTEIN SPRT"/>
    <property type="match status" value="1"/>
</dbReference>
<dbReference type="Pfam" id="PF10263">
    <property type="entry name" value="SprT-like"/>
    <property type="match status" value="1"/>
</dbReference>
<dbReference type="Pfam" id="PF17283">
    <property type="entry name" value="Zn_ribbon_SprT"/>
    <property type="match status" value="1"/>
</dbReference>
<dbReference type="SMART" id="SM00731">
    <property type="entry name" value="SprT"/>
    <property type="match status" value="1"/>
</dbReference>
<dbReference type="PROSITE" id="PS00142">
    <property type="entry name" value="ZINC_PROTEASE"/>
    <property type="match status" value="1"/>
</dbReference>
<sequence>MKTSRLPIAIQQAVMRRLREKLAQANLKLGRNYPEPKLSYTQRGTSAGTAWLESYEIRLNPVLLLENSEAFIEEVVPHELAHLLVWKHFGRVAPHGKEWKWMMESVLGVPARRTHQFELQSVRRNTFPYRCKCQEHQLTVRRHNRVVRGEAVYRCVHCGEQLVAK</sequence>
<organism>
    <name type="scientific">Escherichia coli O1:K1 / APEC</name>
    <dbReference type="NCBI Taxonomy" id="405955"/>
    <lineage>
        <taxon>Bacteria</taxon>
        <taxon>Pseudomonadati</taxon>
        <taxon>Pseudomonadota</taxon>
        <taxon>Gammaproteobacteria</taxon>
        <taxon>Enterobacterales</taxon>
        <taxon>Enterobacteriaceae</taxon>
        <taxon>Escherichia</taxon>
    </lineage>
</organism>
<accession>A1AFD0</accession>
<comment type="cofactor">
    <cofactor evidence="1">
        <name>Zn(2+)</name>
        <dbReference type="ChEBI" id="CHEBI:29105"/>
    </cofactor>
    <text evidence="1">Binds 1 zinc ion.</text>
</comment>
<comment type="subcellular location">
    <subcellularLocation>
        <location evidence="1">Cytoplasm</location>
    </subcellularLocation>
</comment>
<comment type="similarity">
    <text evidence="1">Belongs to the SprT family.</text>
</comment>
<gene>
    <name evidence="1" type="primary">sprT</name>
    <name type="ordered locus">Ecok1_28760</name>
    <name type="ORF">APECO1_3577</name>
</gene>
<keyword id="KW-0963">Cytoplasm</keyword>
<keyword id="KW-0479">Metal-binding</keyword>
<keyword id="KW-1185">Reference proteome</keyword>
<keyword id="KW-0862">Zinc</keyword>
<reference key="1">
    <citation type="journal article" date="2007" name="J. Bacteriol.">
        <title>The genome sequence of avian pathogenic Escherichia coli strain O1:K1:H7 shares strong similarities with human extraintestinal pathogenic E. coli genomes.</title>
        <authorList>
            <person name="Johnson T.J."/>
            <person name="Kariyawasam S."/>
            <person name="Wannemuehler Y."/>
            <person name="Mangiamele P."/>
            <person name="Johnson S.J."/>
            <person name="Doetkott C."/>
            <person name="Skyberg J.A."/>
            <person name="Lynne A.M."/>
            <person name="Johnson J.R."/>
            <person name="Nolan L.K."/>
        </authorList>
    </citation>
    <scope>NUCLEOTIDE SEQUENCE [LARGE SCALE GENOMIC DNA]</scope>
</reference>
<proteinExistence type="inferred from homology"/>
<name>SPRT_ECOK1</name>
<feature type="chain" id="PRO_1000046525" description="Protein SprT">
    <location>
        <begin position="1"/>
        <end position="165"/>
    </location>
</feature>
<feature type="domain" description="SprT-like" evidence="1">
    <location>
        <begin position="20"/>
        <end position="163"/>
    </location>
</feature>
<feature type="active site" evidence="1">
    <location>
        <position position="79"/>
    </location>
</feature>
<feature type="binding site" evidence="1">
    <location>
        <position position="78"/>
    </location>
    <ligand>
        <name>Zn(2+)</name>
        <dbReference type="ChEBI" id="CHEBI:29105"/>
    </ligand>
</feature>
<feature type="binding site" evidence="1">
    <location>
        <position position="82"/>
    </location>
    <ligand>
        <name>Zn(2+)</name>
        <dbReference type="ChEBI" id="CHEBI:29105"/>
    </ligand>
</feature>